<reference key="1">
    <citation type="journal article" date="2009" name="J. Bacteriol.">
        <title>Complete genome sequence and comparative genome analysis of enteropathogenic Escherichia coli O127:H6 strain E2348/69.</title>
        <authorList>
            <person name="Iguchi A."/>
            <person name="Thomson N.R."/>
            <person name="Ogura Y."/>
            <person name="Saunders D."/>
            <person name="Ooka T."/>
            <person name="Henderson I.R."/>
            <person name="Harris D."/>
            <person name="Asadulghani M."/>
            <person name="Kurokawa K."/>
            <person name="Dean P."/>
            <person name="Kenny B."/>
            <person name="Quail M.A."/>
            <person name="Thurston S."/>
            <person name="Dougan G."/>
            <person name="Hayashi T."/>
            <person name="Parkhill J."/>
            <person name="Frankel G."/>
        </authorList>
    </citation>
    <scope>NUCLEOTIDE SEQUENCE [LARGE SCALE GENOMIC DNA]</scope>
    <source>
        <strain>E2348/69 / EPEC</strain>
    </source>
</reference>
<keyword id="KW-1015">Disulfide bond</keyword>
<keyword id="KW-0574">Periplasm</keyword>
<keyword id="KW-0646">Protease inhibitor</keyword>
<keyword id="KW-1185">Reference proteome</keyword>
<keyword id="KW-0722">Serine protease inhibitor</keyword>
<keyword id="KW-0732">Signal</keyword>
<gene>
    <name evidence="1" type="primary">eco</name>
    <name type="ordered locus">E2348C_2354</name>
</gene>
<comment type="function">
    <text evidence="1">General inhibitor of pancreatic serine proteases: inhibits chymotrypsin, trypsin, elastases, factor X, kallikrein as well as a variety of other proteases.</text>
</comment>
<comment type="subunit">
    <text evidence="1">Homodimer.</text>
</comment>
<comment type="subcellular location">
    <subcellularLocation>
        <location evidence="1">Periplasm</location>
    </subcellularLocation>
</comment>
<comment type="similarity">
    <text evidence="1">Belongs to the protease inhibitor I11 (ecotin) family.</text>
</comment>
<feature type="signal peptide" evidence="1">
    <location>
        <begin position="1"/>
        <end position="20"/>
    </location>
</feature>
<feature type="chain" id="PRO_1000192698" description="Ecotin">
    <location>
        <begin position="21"/>
        <end position="162"/>
    </location>
</feature>
<feature type="site" description="Reactive bond" evidence="1">
    <location>
        <begin position="104"/>
        <end position="105"/>
    </location>
</feature>
<feature type="disulfide bond" evidence="1">
    <location>
        <begin position="70"/>
        <end position="107"/>
    </location>
</feature>
<proteinExistence type="inferred from homology"/>
<organism>
    <name type="scientific">Escherichia coli O127:H6 (strain E2348/69 / EPEC)</name>
    <dbReference type="NCBI Taxonomy" id="574521"/>
    <lineage>
        <taxon>Bacteria</taxon>
        <taxon>Pseudomonadati</taxon>
        <taxon>Pseudomonadota</taxon>
        <taxon>Gammaproteobacteria</taxon>
        <taxon>Enterobacterales</taxon>
        <taxon>Enterobacteriaceae</taxon>
        <taxon>Escherichia</taxon>
    </lineage>
</organism>
<name>ECOT_ECO27</name>
<sequence>MKTILPAVLFAAFATTSAWAAESVQPLEKIAPYPQAEKGMKRQVIQLTPQEDESTLKVELLIGQTLEVDCNLHRLGGKLESKTLEGWGYDYYVFDKVSSPVSTMMACPDGKKEKKFVTAYLGDAGMLRYNSKLPIVVYTPDNVDVKYRVWKAEEKIDNAVVR</sequence>
<evidence type="ECO:0000255" key="1">
    <source>
        <dbReference type="HAMAP-Rule" id="MF_00706"/>
    </source>
</evidence>
<dbReference type="EMBL" id="FM180568">
    <property type="protein sequence ID" value="CAS09902.1"/>
    <property type="molecule type" value="Genomic_DNA"/>
</dbReference>
<dbReference type="SMR" id="B7UFM3"/>
<dbReference type="MEROPS" id="I11.001"/>
<dbReference type="KEGG" id="ecg:E2348C_2354"/>
<dbReference type="HOGENOM" id="CLU_111565_0_0_6"/>
<dbReference type="Proteomes" id="UP000008205">
    <property type="component" value="Chromosome"/>
</dbReference>
<dbReference type="GO" id="GO:0042597">
    <property type="term" value="C:periplasmic space"/>
    <property type="evidence" value="ECO:0007669"/>
    <property type="project" value="UniProtKB-SubCell"/>
</dbReference>
<dbReference type="GO" id="GO:0004867">
    <property type="term" value="F:serine-type endopeptidase inhibitor activity"/>
    <property type="evidence" value="ECO:0007669"/>
    <property type="project" value="UniProtKB-UniRule"/>
</dbReference>
<dbReference type="CDD" id="cd00242">
    <property type="entry name" value="Ecotin"/>
    <property type="match status" value="1"/>
</dbReference>
<dbReference type="FunFam" id="2.60.40.550:FF:000001">
    <property type="entry name" value="Ecotin"/>
    <property type="match status" value="1"/>
</dbReference>
<dbReference type="FunFam" id="4.10.1230.10:FF:000001">
    <property type="entry name" value="Ecotin"/>
    <property type="match status" value="1"/>
</dbReference>
<dbReference type="Gene3D" id="2.60.40.550">
    <property type="entry name" value="Ecotin"/>
    <property type="match status" value="1"/>
</dbReference>
<dbReference type="Gene3D" id="4.10.1230.10">
    <property type="entry name" value="Ecotin, trypsin inhibitor"/>
    <property type="match status" value="1"/>
</dbReference>
<dbReference type="HAMAP" id="MF_00706">
    <property type="entry name" value="Ecotin"/>
    <property type="match status" value="1"/>
</dbReference>
<dbReference type="InterPro" id="IPR027438">
    <property type="entry name" value="Ecotin_C"/>
</dbReference>
<dbReference type="InterPro" id="IPR036198">
    <property type="entry name" value="Ecotin_sf"/>
</dbReference>
<dbReference type="InterPro" id="IPR005658">
    <property type="entry name" value="Prot_inh_ecotin"/>
</dbReference>
<dbReference type="InterPro" id="IPR023084">
    <property type="entry name" value="Prot_inh_ecotin_gammaproteobac"/>
</dbReference>
<dbReference type="NCBIfam" id="NF002987">
    <property type="entry name" value="PRK03719.1"/>
    <property type="match status" value="1"/>
</dbReference>
<dbReference type="PANTHER" id="PTHR35890">
    <property type="match status" value="1"/>
</dbReference>
<dbReference type="PANTHER" id="PTHR35890:SF3">
    <property type="entry name" value="ECOTIN"/>
    <property type="match status" value="1"/>
</dbReference>
<dbReference type="Pfam" id="PF03974">
    <property type="entry name" value="Ecotin"/>
    <property type="match status" value="1"/>
</dbReference>
<dbReference type="PIRSF" id="PIRSF006865">
    <property type="entry name" value="Prot_inh_ecotin"/>
    <property type="match status" value="1"/>
</dbReference>
<dbReference type="SUPFAM" id="SSF49772">
    <property type="entry name" value="Ecotin, trypsin inhibitor"/>
    <property type="match status" value="1"/>
</dbReference>
<accession>B7UFM3</accession>
<protein>
    <recommendedName>
        <fullName evidence="1">Ecotin</fullName>
    </recommendedName>
</protein>